<organism>
    <name type="scientific">Trichlorobacter lovleyi (strain ATCC BAA-1151 / DSM 17278 / SZ)</name>
    <name type="common">Geobacter lovleyi</name>
    <dbReference type="NCBI Taxonomy" id="398767"/>
    <lineage>
        <taxon>Bacteria</taxon>
        <taxon>Pseudomonadati</taxon>
        <taxon>Thermodesulfobacteriota</taxon>
        <taxon>Desulfuromonadia</taxon>
        <taxon>Geobacterales</taxon>
        <taxon>Geobacteraceae</taxon>
        <taxon>Trichlorobacter</taxon>
    </lineage>
</organism>
<proteinExistence type="inferred from homology"/>
<sequence>MSQNIGKISQVIGAVIDVEFEPGKLPEIYHALRVTNPAIDDRENNLVLEVAQHLGENSVRTIAMDSTDGLKRGQAVIDTGKQICAPVGRKTLGRIMNVIGEPVDEMGPIGNEKEYGIHREAPAFEDQSTKVEAFTTGIKVVDLLAPYARGGKIGLFGGAGVGKTVLIMELINNIAKQHGGYSVFAGVGERTREGNDLWMEMKESGVLDKAALVYGQMNEPPGARARVALTALSVAEYFRDEENQDVLLFIDNIFRFTQAGSEVSALLGRIPSAVGYQPTLATEMGELQERITSTKKGSITSVQAIYVPADDLTDPAPATAFAHLDATTVLSRQIAELGIYPAVDPLDSTSRILDPQVIGEEHYAVARSVQYVLQKYKDLQDIIAILGMDELSEEDKLVVARARKIQRFLSQPFHVAEAFTGSPGKYVELKDTIKGFQEIVAGKHDNLPEQAFYMVGSIEEAIEKAAKLAAV</sequence>
<protein>
    <recommendedName>
        <fullName evidence="1">ATP synthase subunit beta</fullName>
        <ecNumber evidence="1">7.1.2.2</ecNumber>
    </recommendedName>
    <alternativeName>
        <fullName evidence="1">ATP synthase F1 sector subunit beta</fullName>
    </alternativeName>
    <alternativeName>
        <fullName evidence="1">F-ATPase subunit beta</fullName>
    </alternativeName>
</protein>
<feature type="chain" id="PRO_1000143512" description="ATP synthase subunit beta">
    <location>
        <begin position="1"/>
        <end position="471"/>
    </location>
</feature>
<feature type="binding site" evidence="1">
    <location>
        <begin position="157"/>
        <end position="164"/>
    </location>
    <ligand>
        <name>ATP</name>
        <dbReference type="ChEBI" id="CHEBI:30616"/>
    </ligand>
</feature>
<comment type="function">
    <text evidence="1">Produces ATP from ADP in the presence of a proton gradient across the membrane. The catalytic sites are hosted primarily by the beta subunits.</text>
</comment>
<comment type="catalytic activity">
    <reaction evidence="1">
        <text>ATP + H2O + 4 H(+)(in) = ADP + phosphate + 5 H(+)(out)</text>
        <dbReference type="Rhea" id="RHEA:57720"/>
        <dbReference type="ChEBI" id="CHEBI:15377"/>
        <dbReference type="ChEBI" id="CHEBI:15378"/>
        <dbReference type="ChEBI" id="CHEBI:30616"/>
        <dbReference type="ChEBI" id="CHEBI:43474"/>
        <dbReference type="ChEBI" id="CHEBI:456216"/>
        <dbReference type="EC" id="7.1.2.2"/>
    </reaction>
</comment>
<comment type="subunit">
    <text evidence="1">F-type ATPases have 2 components, CF(1) - the catalytic core - and CF(0) - the membrane proton channel. CF(1) has five subunits: alpha(3), beta(3), gamma(1), delta(1), epsilon(1). CF(0) has three main subunits: a(1), b(2) and c(9-12). The alpha and beta chains form an alternating ring which encloses part of the gamma chain. CF(1) is attached to CF(0) by a central stalk formed by the gamma and epsilon chains, while a peripheral stalk is formed by the delta and b chains.</text>
</comment>
<comment type="subcellular location">
    <subcellularLocation>
        <location evidence="1">Cell inner membrane</location>
        <topology evidence="1">Peripheral membrane protein</topology>
    </subcellularLocation>
</comment>
<comment type="similarity">
    <text evidence="1">Belongs to the ATPase alpha/beta chains family.</text>
</comment>
<keyword id="KW-0066">ATP synthesis</keyword>
<keyword id="KW-0067">ATP-binding</keyword>
<keyword id="KW-0997">Cell inner membrane</keyword>
<keyword id="KW-1003">Cell membrane</keyword>
<keyword id="KW-0139">CF(1)</keyword>
<keyword id="KW-0375">Hydrogen ion transport</keyword>
<keyword id="KW-0406">Ion transport</keyword>
<keyword id="KW-0472">Membrane</keyword>
<keyword id="KW-0547">Nucleotide-binding</keyword>
<keyword id="KW-1185">Reference proteome</keyword>
<keyword id="KW-1278">Translocase</keyword>
<keyword id="KW-0813">Transport</keyword>
<gene>
    <name evidence="1" type="primary">atpD</name>
    <name type="ordered locus">Glov_3170</name>
</gene>
<reference key="1">
    <citation type="submission" date="2008-05" db="EMBL/GenBank/DDBJ databases">
        <title>Complete sequence of chromosome of Geobacter lovleyi SZ.</title>
        <authorList>
            <consortium name="US DOE Joint Genome Institute"/>
            <person name="Lucas S."/>
            <person name="Copeland A."/>
            <person name="Lapidus A."/>
            <person name="Glavina del Rio T."/>
            <person name="Dalin E."/>
            <person name="Tice H."/>
            <person name="Bruce D."/>
            <person name="Goodwin L."/>
            <person name="Pitluck S."/>
            <person name="Chertkov O."/>
            <person name="Meincke L."/>
            <person name="Brettin T."/>
            <person name="Detter J.C."/>
            <person name="Han C."/>
            <person name="Tapia R."/>
            <person name="Kuske C.R."/>
            <person name="Schmutz J."/>
            <person name="Larimer F."/>
            <person name="Land M."/>
            <person name="Hauser L."/>
            <person name="Kyrpides N."/>
            <person name="Mikhailova N."/>
            <person name="Sung Y."/>
            <person name="Fletcher K.E."/>
            <person name="Ritalahti K.M."/>
            <person name="Loeffler F.E."/>
            <person name="Richardson P."/>
        </authorList>
    </citation>
    <scope>NUCLEOTIDE SEQUENCE [LARGE SCALE GENOMIC DNA]</scope>
    <source>
        <strain>ATCC BAA-1151 / DSM 17278 / SZ</strain>
    </source>
</reference>
<dbReference type="EC" id="7.1.2.2" evidence="1"/>
<dbReference type="EMBL" id="CP001089">
    <property type="protein sequence ID" value="ACD96876.1"/>
    <property type="molecule type" value="Genomic_DNA"/>
</dbReference>
<dbReference type="RefSeq" id="WP_012471200.1">
    <property type="nucleotide sequence ID" value="NC_010814.1"/>
</dbReference>
<dbReference type="SMR" id="B3EA01"/>
<dbReference type="STRING" id="398767.Glov_3170"/>
<dbReference type="KEGG" id="glo:Glov_3170"/>
<dbReference type="eggNOG" id="COG0055">
    <property type="taxonomic scope" value="Bacteria"/>
</dbReference>
<dbReference type="HOGENOM" id="CLU_022398_0_2_7"/>
<dbReference type="OrthoDB" id="9801639at2"/>
<dbReference type="Proteomes" id="UP000002420">
    <property type="component" value="Chromosome"/>
</dbReference>
<dbReference type="GO" id="GO:0005886">
    <property type="term" value="C:plasma membrane"/>
    <property type="evidence" value="ECO:0007669"/>
    <property type="project" value="UniProtKB-SubCell"/>
</dbReference>
<dbReference type="GO" id="GO:0045259">
    <property type="term" value="C:proton-transporting ATP synthase complex"/>
    <property type="evidence" value="ECO:0007669"/>
    <property type="project" value="UniProtKB-KW"/>
</dbReference>
<dbReference type="GO" id="GO:0005524">
    <property type="term" value="F:ATP binding"/>
    <property type="evidence" value="ECO:0007669"/>
    <property type="project" value="UniProtKB-UniRule"/>
</dbReference>
<dbReference type="GO" id="GO:0016887">
    <property type="term" value="F:ATP hydrolysis activity"/>
    <property type="evidence" value="ECO:0007669"/>
    <property type="project" value="InterPro"/>
</dbReference>
<dbReference type="GO" id="GO:0046933">
    <property type="term" value="F:proton-transporting ATP synthase activity, rotational mechanism"/>
    <property type="evidence" value="ECO:0007669"/>
    <property type="project" value="UniProtKB-UniRule"/>
</dbReference>
<dbReference type="CDD" id="cd18110">
    <property type="entry name" value="ATP-synt_F1_beta_C"/>
    <property type="match status" value="1"/>
</dbReference>
<dbReference type="CDD" id="cd18115">
    <property type="entry name" value="ATP-synt_F1_beta_N"/>
    <property type="match status" value="1"/>
</dbReference>
<dbReference type="CDD" id="cd01133">
    <property type="entry name" value="F1-ATPase_beta_CD"/>
    <property type="match status" value="1"/>
</dbReference>
<dbReference type="FunFam" id="1.10.1140.10:FF:000001">
    <property type="entry name" value="ATP synthase subunit beta"/>
    <property type="match status" value="1"/>
</dbReference>
<dbReference type="FunFam" id="2.40.10.170:FF:000005">
    <property type="entry name" value="ATP synthase subunit beta"/>
    <property type="match status" value="1"/>
</dbReference>
<dbReference type="FunFam" id="3.40.50.300:FF:000026">
    <property type="entry name" value="ATP synthase subunit beta"/>
    <property type="match status" value="1"/>
</dbReference>
<dbReference type="Gene3D" id="2.40.10.170">
    <property type="match status" value="1"/>
</dbReference>
<dbReference type="Gene3D" id="1.10.1140.10">
    <property type="entry name" value="Bovine Mitochondrial F1-atpase, Atp Synthase Beta Chain, Chain D, domain 3"/>
    <property type="match status" value="1"/>
</dbReference>
<dbReference type="Gene3D" id="3.40.50.300">
    <property type="entry name" value="P-loop containing nucleotide triphosphate hydrolases"/>
    <property type="match status" value="1"/>
</dbReference>
<dbReference type="HAMAP" id="MF_01347">
    <property type="entry name" value="ATP_synth_beta_bact"/>
    <property type="match status" value="1"/>
</dbReference>
<dbReference type="InterPro" id="IPR003593">
    <property type="entry name" value="AAA+_ATPase"/>
</dbReference>
<dbReference type="InterPro" id="IPR055190">
    <property type="entry name" value="ATP-synt_VA_C"/>
</dbReference>
<dbReference type="InterPro" id="IPR005722">
    <property type="entry name" value="ATP_synth_F1_bsu"/>
</dbReference>
<dbReference type="InterPro" id="IPR020003">
    <property type="entry name" value="ATPase_a/bsu_AS"/>
</dbReference>
<dbReference type="InterPro" id="IPR050053">
    <property type="entry name" value="ATPase_alpha/beta_chains"/>
</dbReference>
<dbReference type="InterPro" id="IPR004100">
    <property type="entry name" value="ATPase_F1/V1/A1_a/bsu_N"/>
</dbReference>
<dbReference type="InterPro" id="IPR036121">
    <property type="entry name" value="ATPase_F1/V1/A1_a/bsu_N_sf"/>
</dbReference>
<dbReference type="InterPro" id="IPR000194">
    <property type="entry name" value="ATPase_F1/V1/A1_a/bsu_nucl-bd"/>
</dbReference>
<dbReference type="InterPro" id="IPR024034">
    <property type="entry name" value="ATPase_F1/V1_b/a_C"/>
</dbReference>
<dbReference type="InterPro" id="IPR027417">
    <property type="entry name" value="P-loop_NTPase"/>
</dbReference>
<dbReference type="NCBIfam" id="TIGR01039">
    <property type="entry name" value="atpD"/>
    <property type="match status" value="1"/>
</dbReference>
<dbReference type="PANTHER" id="PTHR15184">
    <property type="entry name" value="ATP SYNTHASE"/>
    <property type="match status" value="1"/>
</dbReference>
<dbReference type="PANTHER" id="PTHR15184:SF71">
    <property type="entry name" value="ATP SYNTHASE SUBUNIT BETA, MITOCHONDRIAL"/>
    <property type="match status" value="1"/>
</dbReference>
<dbReference type="Pfam" id="PF00006">
    <property type="entry name" value="ATP-synt_ab"/>
    <property type="match status" value="1"/>
</dbReference>
<dbReference type="Pfam" id="PF02874">
    <property type="entry name" value="ATP-synt_ab_N"/>
    <property type="match status" value="1"/>
</dbReference>
<dbReference type="Pfam" id="PF22919">
    <property type="entry name" value="ATP-synt_VA_C"/>
    <property type="match status" value="1"/>
</dbReference>
<dbReference type="PIRSF" id="PIRSF039072">
    <property type="entry name" value="ATPase_subunit_beta"/>
    <property type="match status" value="1"/>
</dbReference>
<dbReference type="SMART" id="SM00382">
    <property type="entry name" value="AAA"/>
    <property type="match status" value="1"/>
</dbReference>
<dbReference type="SUPFAM" id="SSF47917">
    <property type="entry name" value="C-terminal domain of alpha and beta subunits of F1 ATP synthase"/>
    <property type="match status" value="1"/>
</dbReference>
<dbReference type="SUPFAM" id="SSF50615">
    <property type="entry name" value="N-terminal domain of alpha and beta subunits of F1 ATP synthase"/>
    <property type="match status" value="1"/>
</dbReference>
<dbReference type="SUPFAM" id="SSF52540">
    <property type="entry name" value="P-loop containing nucleoside triphosphate hydrolases"/>
    <property type="match status" value="1"/>
</dbReference>
<dbReference type="PROSITE" id="PS00152">
    <property type="entry name" value="ATPASE_ALPHA_BETA"/>
    <property type="match status" value="1"/>
</dbReference>
<evidence type="ECO:0000255" key="1">
    <source>
        <dbReference type="HAMAP-Rule" id="MF_01347"/>
    </source>
</evidence>
<name>ATPB_TRIL1</name>
<accession>B3EA01</accession>